<name>SMRB_SALG2</name>
<organism>
    <name type="scientific">Salmonella gallinarum (strain 287/91 / NCTC 13346)</name>
    <dbReference type="NCBI Taxonomy" id="550538"/>
    <lineage>
        <taxon>Bacteria</taxon>
        <taxon>Pseudomonadati</taxon>
        <taxon>Pseudomonadota</taxon>
        <taxon>Gammaproteobacteria</taxon>
        <taxon>Enterobacterales</taxon>
        <taxon>Enterobacteriaceae</taxon>
        <taxon>Salmonella</taxon>
    </lineage>
</organism>
<comment type="function">
    <text evidence="1">Acts as a ribosome collision sensor. Detects stalled/collided disomes (pairs of ribosomes where the leading ribosome is stalled and a second ribosome has collided with it) and endonucleolytically cleaves mRNA at the 5' boundary of the stalled ribosome. Stalled/collided disomes form a new interface (primarily via the 30S subunits) that binds SmrB. Cleaved mRNA becomes available for tmRNA ligation, leading to ribosomal subunit dissociation and rescue of stalled ribosomes.</text>
</comment>
<comment type="subunit">
    <text evidence="1">Associates with collided ribosomes, but not with correctly translating polysomes.</text>
</comment>
<comment type="similarity">
    <text evidence="1">Belongs to the SmrB family.</text>
</comment>
<sequence length="183" mass="21177">MKKKTSLSEEDQALFRQLMVGTRKIKQDTIVHRPLRKKITEVPTRRLIQEQADASHYFSDEFQPLLNTEGPVKYVREDVSHFELKKMRRGDYSPELFLDLHGLTQLQAKQELGALIAACRREHIFCACVMHGHGKHILKQQTPLWLAQHPHVMAFHQAPKEYGGDAALLVLIEVEEWQPPELP</sequence>
<evidence type="ECO:0000255" key="1">
    <source>
        <dbReference type="HAMAP-Rule" id="MF_01042"/>
    </source>
</evidence>
<dbReference type="EC" id="3.1.-.-" evidence="1"/>
<dbReference type="EMBL" id="AM933173">
    <property type="protein sequence ID" value="CAR38245.1"/>
    <property type="molecule type" value="Genomic_DNA"/>
</dbReference>
<dbReference type="RefSeq" id="WP_000730794.1">
    <property type="nucleotide sequence ID" value="NC_011274.1"/>
</dbReference>
<dbReference type="SMR" id="B5RCL1"/>
<dbReference type="KEGG" id="seg:SG2416"/>
<dbReference type="HOGENOM" id="CLU_055978_4_0_6"/>
<dbReference type="Proteomes" id="UP000008321">
    <property type="component" value="Chromosome"/>
</dbReference>
<dbReference type="GO" id="GO:0004521">
    <property type="term" value="F:RNA endonuclease activity"/>
    <property type="evidence" value="ECO:0007669"/>
    <property type="project" value="UniProtKB-UniRule"/>
</dbReference>
<dbReference type="GO" id="GO:0019843">
    <property type="term" value="F:rRNA binding"/>
    <property type="evidence" value="ECO:0007669"/>
    <property type="project" value="UniProtKB-UniRule"/>
</dbReference>
<dbReference type="GO" id="GO:0072344">
    <property type="term" value="P:rescue of stalled ribosome"/>
    <property type="evidence" value="ECO:0007669"/>
    <property type="project" value="UniProtKB-UniRule"/>
</dbReference>
<dbReference type="Gene3D" id="3.30.1370.110">
    <property type="match status" value="1"/>
</dbReference>
<dbReference type="HAMAP" id="MF_01042">
    <property type="entry name" value="SmrB"/>
    <property type="match status" value="1"/>
</dbReference>
<dbReference type="InterPro" id="IPR002625">
    <property type="entry name" value="Smr_dom"/>
</dbReference>
<dbReference type="InterPro" id="IPR036063">
    <property type="entry name" value="Smr_dom_sf"/>
</dbReference>
<dbReference type="InterPro" id="IPR022990">
    <property type="entry name" value="SmrB-like"/>
</dbReference>
<dbReference type="NCBIfam" id="NF003432">
    <property type="entry name" value="PRK04946.1"/>
    <property type="match status" value="1"/>
</dbReference>
<dbReference type="PANTHER" id="PTHR35562">
    <property type="entry name" value="DNA ENDONUCLEASE SMRA-RELATED"/>
    <property type="match status" value="1"/>
</dbReference>
<dbReference type="PANTHER" id="PTHR35562:SF1">
    <property type="entry name" value="UPF0115 PROTEIN YFCN"/>
    <property type="match status" value="1"/>
</dbReference>
<dbReference type="Pfam" id="PF01713">
    <property type="entry name" value="Smr"/>
    <property type="match status" value="1"/>
</dbReference>
<dbReference type="SMART" id="SM00463">
    <property type="entry name" value="SMR"/>
    <property type="match status" value="1"/>
</dbReference>
<dbReference type="SUPFAM" id="SSF160443">
    <property type="entry name" value="SMR domain-like"/>
    <property type="match status" value="1"/>
</dbReference>
<dbReference type="PROSITE" id="PS50828">
    <property type="entry name" value="SMR"/>
    <property type="match status" value="1"/>
</dbReference>
<accession>B5RCL1</accession>
<keyword id="KW-0255">Endonuclease</keyword>
<keyword id="KW-0378">Hydrolase</keyword>
<keyword id="KW-0540">Nuclease</keyword>
<keyword id="KW-0694">RNA-binding</keyword>
<keyword id="KW-0699">rRNA-binding</keyword>
<reference key="1">
    <citation type="journal article" date="2008" name="Genome Res.">
        <title>Comparative genome analysis of Salmonella enteritidis PT4 and Salmonella gallinarum 287/91 provides insights into evolutionary and host adaptation pathways.</title>
        <authorList>
            <person name="Thomson N.R."/>
            <person name="Clayton D.J."/>
            <person name="Windhorst D."/>
            <person name="Vernikos G."/>
            <person name="Davidson S."/>
            <person name="Churcher C."/>
            <person name="Quail M.A."/>
            <person name="Stevens M."/>
            <person name="Jones M.A."/>
            <person name="Watson M."/>
            <person name="Barron A."/>
            <person name="Layton A."/>
            <person name="Pickard D."/>
            <person name="Kingsley R.A."/>
            <person name="Bignell A."/>
            <person name="Clark L."/>
            <person name="Harris B."/>
            <person name="Ormond D."/>
            <person name="Abdellah Z."/>
            <person name="Brooks K."/>
            <person name="Cherevach I."/>
            <person name="Chillingworth T."/>
            <person name="Woodward J."/>
            <person name="Norberczak H."/>
            <person name="Lord A."/>
            <person name="Arrowsmith C."/>
            <person name="Jagels K."/>
            <person name="Moule S."/>
            <person name="Mungall K."/>
            <person name="Saunders M."/>
            <person name="Whitehead S."/>
            <person name="Chabalgoity J.A."/>
            <person name="Maskell D."/>
            <person name="Humphreys T."/>
            <person name="Roberts M."/>
            <person name="Barrow P.A."/>
            <person name="Dougan G."/>
            <person name="Parkhill J."/>
        </authorList>
    </citation>
    <scope>NUCLEOTIDE SEQUENCE [LARGE SCALE GENOMIC DNA]</scope>
    <source>
        <strain>287/91 / NCTC 13346</strain>
    </source>
</reference>
<proteinExistence type="inferred from homology"/>
<feature type="chain" id="PRO_1000136050" description="Ribosome rescue factor SmrB">
    <location>
        <begin position="1"/>
        <end position="183"/>
    </location>
</feature>
<feature type="domain" description="Smr" evidence="1">
    <location>
        <begin position="98"/>
        <end position="173"/>
    </location>
</feature>
<protein>
    <recommendedName>
        <fullName evidence="1">Ribosome rescue factor SmrB</fullName>
        <ecNumber evidence="1">3.1.-.-</ecNumber>
    </recommendedName>
</protein>
<gene>
    <name evidence="1" type="primary">smrB</name>
    <name type="ordered locus">SG2416</name>
</gene>